<name>GPH_PSESS</name>
<protein>
    <recommendedName>
        <fullName>Probable phosphoglycolate phosphatase</fullName>
        <shortName>PGP</shortName>
        <shortName>PGPase</shortName>
        <ecNumber>3.1.3.18</ecNumber>
    </recommendedName>
</protein>
<reference key="1">
    <citation type="journal article" date="1991" name="J. Bacteriol.">
        <title>Molecular characterization and expression analysis of the anthranilate synthase gene of Pseudomonas syringae subsp. savastanoi.</title>
        <authorList>
            <person name="da Costa e Silva O."/>
            <person name="Kosuge T."/>
        </authorList>
    </citation>
    <scope>NUCLEOTIDE SEQUENCE [GENOMIC DNA]</scope>
</reference>
<keyword id="KW-0119">Carbohydrate metabolism</keyword>
<keyword id="KW-0378">Hydrolase</keyword>
<keyword id="KW-0460">Magnesium</keyword>
<keyword id="KW-0479">Metal-binding</keyword>
<dbReference type="EC" id="3.1.3.18"/>
<dbReference type="EMBL" id="M55911">
    <property type="status" value="NOT_ANNOTATED_CDS"/>
    <property type="molecule type" value="Genomic_DNA"/>
</dbReference>
<dbReference type="PIR" id="B39128">
    <property type="entry name" value="B39128"/>
</dbReference>
<dbReference type="SMR" id="P42510"/>
<dbReference type="UniPathway" id="UPA00865">
    <property type="reaction ID" value="UER00834"/>
</dbReference>
<dbReference type="GO" id="GO:0005829">
    <property type="term" value="C:cytosol"/>
    <property type="evidence" value="ECO:0007669"/>
    <property type="project" value="TreeGrafter"/>
</dbReference>
<dbReference type="GO" id="GO:0046872">
    <property type="term" value="F:metal ion binding"/>
    <property type="evidence" value="ECO:0007669"/>
    <property type="project" value="UniProtKB-KW"/>
</dbReference>
<dbReference type="GO" id="GO:0008967">
    <property type="term" value="F:phosphoglycolate phosphatase activity"/>
    <property type="evidence" value="ECO:0007669"/>
    <property type="project" value="UniProtKB-EC"/>
</dbReference>
<dbReference type="GO" id="GO:0006281">
    <property type="term" value="P:DNA repair"/>
    <property type="evidence" value="ECO:0007669"/>
    <property type="project" value="TreeGrafter"/>
</dbReference>
<dbReference type="GO" id="GO:0046295">
    <property type="term" value="P:glycolate biosynthetic process"/>
    <property type="evidence" value="ECO:0007669"/>
    <property type="project" value="UniProtKB-UniPathway"/>
</dbReference>
<dbReference type="FunFam" id="3.40.50.1000:FF:000022">
    <property type="entry name" value="Phosphoglycolate phosphatase"/>
    <property type="match status" value="1"/>
</dbReference>
<dbReference type="Gene3D" id="3.40.50.1000">
    <property type="entry name" value="HAD superfamily/HAD-like"/>
    <property type="match status" value="1"/>
</dbReference>
<dbReference type="InterPro" id="IPR050155">
    <property type="entry name" value="HAD-like_hydrolase_sf"/>
</dbReference>
<dbReference type="InterPro" id="IPR036412">
    <property type="entry name" value="HAD-like_sf"/>
</dbReference>
<dbReference type="InterPro" id="IPR006439">
    <property type="entry name" value="HAD-SF_hydro_IA"/>
</dbReference>
<dbReference type="InterPro" id="IPR041492">
    <property type="entry name" value="HAD_2"/>
</dbReference>
<dbReference type="InterPro" id="IPR023214">
    <property type="entry name" value="HAD_sf"/>
</dbReference>
<dbReference type="NCBIfam" id="TIGR01549">
    <property type="entry name" value="HAD-SF-IA-v1"/>
    <property type="match status" value="1"/>
</dbReference>
<dbReference type="NCBIfam" id="TIGR01509">
    <property type="entry name" value="HAD-SF-IA-v3"/>
    <property type="match status" value="1"/>
</dbReference>
<dbReference type="PANTHER" id="PTHR43434">
    <property type="entry name" value="PHOSPHOGLYCOLATE PHOSPHATASE"/>
    <property type="match status" value="1"/>
</dbReference>
<dbReference type="PANTHER" id="PTHR43434:SF1">
    <property type="entry name" value="PHOSPHOGLYCOLATE PHOSPHATASE"/>
    <property type="match status" value="1"/>
</dbReference>
<dbReference type="Pfam" id="PF13419">
    <property type="entry name" value="HAD_2"/>
    <property type="match status" value="1"/>
</dbReference>
<dbReference type="PRINTS" id="PR00413">
    <property type="entry name" value="HADHALOGNASE"/>
</dbReference>
<dbReference type="SUPFAM" id="SSF56784">
    <property type="entry name" value="HAD-like"/>
    <property type="match status" value="1"/>
</dbReference>
<evidence type="ECO:0000250" key="1"/>
<evidence type="ECO:0000305" key="2"/>
<accession>P42510</accession>
<organism>
    <name type="scientific">Pseudomonas savastanoi</name>
    <name type="common">Pseudomonas syringae pv. savastanoi</name>
    <dbReference type="NCBI Taxonomy" id="29438"/>
    <lineage>
        <taxon>Bacteria</taxon>
        <taxon>Pseudomonadati</taxon>
        <taxon>Pseudomonadota</taxon>
        <taxon>Gammaproteobacteria</taxon>
        <taxon>Pseudomonadales</taxon>
        <taxon>Pseudomonadaceae</taxon>
        <taxon>Pseudomonas</taxon>
    </lineage>
</organism>
<gene>
    <name type="primary">gph</name>
</gene>
<proteinExistence type="inferred from homology"/>
<feature type="chain" id="PRO_0000108036" description="Probable phosphoglycolate phosphatase">
    <location>
        <begin position="1" status="less than"/>
        <end position="160"/>
    </location>
</feature>
<feature type="binding site" evidence="1">
    <location>
        <position position="70"/>
    </location>
    <ligand>
        <name>Mg(2+)</name>
        <dbReference type="ChEBI" id="CHEBI:18420"/>
    </ligand>
</feature>
<feature type="non-terminal residue">
    <location>
        <position position="1"/>
    </location>
</feature>
<comment type="function">
    <text evidence="1">Specifically catalyzes the dephosphorylation of 2-phosphoglycolate. Is involved in the dissimilation of the intracellular 2-phosphoglycolate formed during the DNA repair of 3'-phosphoglycolate ends, a major class of DNA lesions induced by oxidative stress (By similarity).</text>
</comment>
<comment type="catalytic activity">
    <reaction>
        <text>2-phosphoglycolate + H2O = glycolate + phosphate</text>
        <dbReference type="Rhea" id="RHEA:14369"/>
        <dbReference type="ChEBI" id="CHEBI:15377"/>
        <dbReference type="ChEBI" id="CHEBI:29805"/>
        <dbReference type="ChEBI" id="CHEBI:43474"/>
        <dbReference type="ChEBI" id="CHEBI:58033"/>
        <dbReference type="EC" id="3.1.3.18"/>
    </reaction>
</comment>
<comment type="cofactor">
    <cofactor evidence="1">
        <name>Mg(2+)</name>
        <dbReference type="ChEBI" id="CHEBI:18420"/>
    </cofactor>
</comment>
<comment type="pathway">
    <text>Organic acid metabolism; glycolate biosynthesis; glycolate from 2-phosphoglycolate: step 1/1.</text>
</comment>
<comment type="similarity">
    <text evidence="2">Belongs to the HAD-like hydrolase superfamily. CbbY/CbbZ/Gph/YieH family.</text>
</comment>
<sequence length="160" mass="17848">LQKMGVEMALITNKPERFVAPLLDEMKLGRFFRWIIGGDTMPQKKPDPAALFFVMKMAGVPASQALFVGDSRSDVQAAKAAGVACVALSYGYNHGRPIAEENPAMVIDDLRKLIPGCLDMDAEILLPDIKRPSPRESIVVVTRKLWMKVIKALARWRWRA</sequence>